<dbReference type="EC" id="2.6.1.9" evidence="1"/>
<dbReference type="EMBL" id="CP000301">
    <property type="protein sequence ID" value="ABD89807.1"/>
    <property type="molecule type" value="Genomic_DNA"/>
</dbReference>
<dbReference type="SMR" id="Q20YH9"/>
<dbReference type="STRING" id="316056.RPC_4283"/>
<dbReference type="KEGG" id="rpc:RPC_4283"/>
<dbReference type="eggNOG" id="COG0079">
    <property type="taxonomic scope" value="Bacteria"/>
</dbReference>
<dbReference type="HOGENOM" id="CLU_017584_3_3_5"/>
<dbReference type="OrthoDB" id="9809616at2"/>
<dbReference type="UniPathway" id="UPA00031">
    <property type="reaction ID" value="UER00012"/>
</dbReference>
<dbReference type="GO" id="GO:0004400">
    <property type="term" value="F:histidinol-phosphate transaminase activity"/>
    <property type="evidence" value="ECO:0007669"/>
    <property type="project" value="UniProtKB-UniRule"/>
</dbReference>
<dbReference type="GO" id="GO:0030170">
    <property type="term" value="F:pyridoxal phosphate binding"/>
    <property type="evidence" value="ECO:0007669"/>
    <property type="project" value="InterPro"/>
</dbReference>
<dbReference type="GO" id="GO:0000105">
    <property type="term" value="P:L-histidine biosynthetic process"/>
    <property type="evidence" value="ECO:0007669"/>
    <property type="project" value="UniProtKB-UniRule"/>
</dbReference>
<dbReference type="CDD" id="cd00609">
    <property type="entry name" value="AAT_like"/>
    <property type="match status" value="1"/>
</dbReference>
<dbReference type="Gene3D" id="3.90.1150.10">
    <property type="entry name" value="Aspartate Aminotransferase, domain 1"/>
    <property type="match status" value="1"/>
</dbReference>
<dbReference type="Gene3D" id="3.40.640.10">
    <property type="entry name" value="Type I PLP-dependent aspartate aminotransferase-like (Major domain)"/>
    <property type="match status" value="1"/>
</dbReference>
<dbReference type="HAMAP" id="MF_01023">
    <property type="entry name" value="HisC_aminotrans_2"/>
    <property type="match status" value="1"/>
</dbReference>
<dbReference type="InterPro" id="IPR004839">
    <property type="entry name" value="Aminotransferase_I/II_large"/>
</dbReference>
<dbReference type="InterPro" id="IPR005861">
    <property type="entry name" value="HisP_aminotrans"/>
</dbReference>
<dbReference type="InterPro" id="IPR050106">
    <property type="entry name" value="HistidinolP_aminotransfase"/>
</dbReference>
<dbReference type="InterPro" id="IPR015424">
    <property type="entry name" value="PyrdxlP-dep_Trfase"/>
</dbReference>
<dbReference type="InterPro" id="IPR015421">
    <property type="entry name" value="PyrdxlP-dep_Trfase_major"/>
</dbReference>
<dbReference type="InterPro" id="IPR015422">
    <property type="entry name" value="PyrdxlP-dep_Trfase_small"/>
</dbReference>
<dbReference type="NCBIfam" id="TIGR01141">
    <property type="entry name" value="hisC"/>
    <property type="match status" value="1"/>
</dbReference>
<dbReference type="PANTHER" id="PTHR43643:SF3">
    <property type="entry name" value="HISTIDINOL-PHOSPHATE AMINOTRANSFERASE"/>
    <property type="match status" value="1"/>
</dbReference>
<dbReference type="PANTHER" id="PTHR43643">
    <property type="entry name" value="HISTIDINOL-PHOSPHATE AMINOTRANSFERASE 2"/>
    <property type="match status" value="1"/>
</dbReference>
<dbReference type="Pfam" id="PF00155">
    <property type="entry name" value="Aminotran_1_2"/>
    <property type="match status" value="1"/>
</dbReference>
<dbReference type="SUPFAM" id="SSF53383">
    <property type="entry name" value="PLP-dependent transferases"/>
    <property type="match status" value="1"/>
</dbReference>
<comment type="catalytic activity">
    <reaction evidence="1">
        <text>L-histidinol phosphate + 2-oxoglutarate = 3-(imidazol-4-yl)-2-oxopropyl phosphate + L-glutamate</text>
        <dbReference type="Rhea" id="RHEA:23744"/>
        <dbReference type="ChEBI" id="CHEBI:16810"/>
        <dbReference type="ChEBI" id="CHEBI:29985"/>
        <dbReference type="ChEBI" id="CHEBI:57766"/>
        <dbReference type="ChEBI" id="CHEBI:57980"/>
        <dbReference type="EC" id="2.6.1.9"/>
    </reaction>
</comment>
<comment type="cofactor">
    <cofactor evidence="1">
        <name>pyridoxal 5'-phosphate</name>
        <dbReference type="ChEBI" id="CHEBI:597326"/>
    </cofactor>
</comment>
<comment type="pathway">
    <text evidence="1">Amino-acid biosynthesis; L-histidine biosynthesis; L-histidine from 5-phospho-alpha-D-ribose 1-diphosphate: step 7/9.</text>
</comment>
<comment type="subunit">
    <text evidence="1">Homodimer.</text>
</comment>
<comment type="similarity">
    <text evidence="1">Belongs to the class-II pyridoxal-phosphate-dependent aminotransferase family. Histidinol-phosphate aminotransferase subfamily.</text>
</comment>
<sequence>MSRPVPNPGILDIAPYTPGKSPVAEPGRKVFKLSANETPFGPSPHAIAAYKGAADHLEDYPEGTSRVLREAIGRAYGLDPDRIICGAGSDEILNLLAHTYLGPGDEAIATTYGFLVYPIATMANGAKLVIAEEKNLTCDVDAILAKVSPSTKLVWLANPNNPTGTYVPFDEVKRLRAGLPEHVILVLDGAYADYVGKNDYESGIELVSTTDNTVVTRTFSKIHGLAALRIGWMFGPANIVDAMNRIRGPFNTSVPAQLAAVAAINDTAHVEMSRAHTETWRNWLSEEFTKLGLTVTPSVCNFVLVHFPTAKGKTAADADAFLTKRGLVLRALNNYGLPHALRMTIGTEEANRLVVEAVADFMAQP</sequence>
<name>HIS8_RHOPB</name>
<evidence type="ECO:0000255" key="1">
    <source>
        <dbReference type="HAMAP-Rule" id="MF_01023"/>
    </source>
</evidence>
<evidence type="ECO:0000256" key="2">
    <source>
        <dbReference type="SAM" id="MobiDB-lite"/>
    </source>
</evidence>
<protein>
    <recommendedName>
        <fullName evidence="1">Histidinol-phosphate aminotransferase</fullName>
        <ecNumber evidence="1">2.6.1.9</ecNumber>
    </recommendedName>
    <alternativeName>
        <fullName evidence="1">Imidazole acetol-phosphate transaminase</fullName>
    </alternativeName>
</protein>
<organism>
    <name type="scientific">Rhodopseudomonas palustris (strain BisB18)</name>
    <dbReference type="NCBI Taxonomy" id="316056"/>
    <lineage>
        <taxon>Bacteria</taxon>
        <taxon>Pseudomonadati</taxon>
        <taxon>Pseudomonadota</taxon>
        <taxon>Alphaproteobacteria</taxon>
        <taxon>Hyphomicrobiales</taxon>
        <taxon>Nitrobacteraceae</taxon>
        <taxon>Rhodopseudomonas</taxon>
    </lineage>
</organism>
<keyword id="KW-0028">Amino-acid biosynthesis</keyword>
<keyword id="KW-0032">Aminotransferase</keyword>
<keyword id="KW-0368">Histidine biosynthesis</keyword>
<keyword id="KW-0663">Pyridoxal phosphate</keyword>
<keyword id="KW-0808">Transferase</keyword>
<accession>Q20YH9</accession>
<feature type="chain" id="PRO_1000063494" description="Histidinol-phosphate aminotransferase">
    <location>
        <begin position="1"/>
        <end position="365"/>
    </location>
</feature>
<feature type="region of interest" description="Disordered" evidence="2">
    <location>
        <begin position="1"/>
        <end position="23"/>
    </location>
</feature>
<feature type="modified residue" description="N6-(pyridoxal phosphate)lysine" evidence="1">
    <location>
        <position position="221"/>
    </location>
</feature>
<gene>
    <name evidence="1" type="primary">hisC</name>
    <name type="ordered locus">RPC_4283</name>
</gene>
<reference key="1">
    <citation type="submission" date="2006-03" db="EMBL/GenBank/DDBJ databases">
        <title>Complete sequence of Rhodopseudomonas palustris BisB18.</title>
        <authorList>
            <consortium name="US DOE Joint Genome Institute"/>
            <person name="Copeland A."/>
            <person name="Lucas S."/>
            <person name="Lapidus A."/>
            <person name="Barry K."/>
            <person name="Detter J.C."/>
            <person name="Glavina del Rio T."/>
            <person name="Hammon N."/>
            <person name="Israni S."/>
            <person name="Dalin E."/>
            <person name="Tice H."/>
            <person name="Pitluck S."/>
            <person name="Chain P."/>
            <person name="Malfatti S."/>
            <person name="Shin M."/>
            <person name="Vergez L."/>
            <person name="Schmutz J."/>
            <person name="Larimer F."/>
            <person name="Land M."/>
            <person name="Hauser L."/>
            <person name="Pelletier D.A."/>
            <person name="Kyrpides N."/>
            <person name="Anderson I."/>
            <person name="Oda Y."/>
            <person name="Harwood C.S."/>
            <person name="Richardson P."/>
        </authorList>
    </citation>
    <scope>NUCLEOTIDE SEQUENCE [LARGE SCALE GENOMIC DNA]</scope>
    <source>
        <strain>BisB18</strain>
    </source>
</reference>
<proteinExistence type="inferred from homology"/>